<keyword id="KW-0050">Antiport</keyword>
<keyword id="KW-0997">Cell inner membrane</keyword>
<keyword id="KW-1003">Cell membrane</keyword>
<keyword id="KW-0406">Ion transport</keyword>
<keyword id="KW-0472">Membrane</keyword>
<keyword id="KW-0630">Potassium</keyword>
<keyword id="KW-0633">Potassium transport</keyword>
<keyword id="KW-0812">Transmembrane</keyword>
<keyword id="KW-1133">Transmembrane helix</keyword>
<keyword id="KW-0813">Transport</keyword>
<comment type="function">
    <text evidence="1">Pore-forming subunit of a potassium efflux system that confers protection against electrophiles. Catalyzes K(+)/H(+) antiport.</text>
</comment>
<comment type="subunit">
    <text evidence="1">Interacts with the regulatory subunit KefG.</text>
</comment>
<comment type="subcellular location">
    <subcellularLocation>
        <location evidence="1">Cell inner membrane</location>
        <topology evidence="1">Multi-pass membrane protein</topology>
    </subcellularLocation>
</comment>
<comment type="similarity">
    <text evidence="1">Belongs to the monovalent cation:proton antiporter 2 (CPA2) transporter (TC 2.A.37) family. KefB subfamily.</text>
</comment>
<protein>
    <recommendedName>
        <fullName evidence="1">Glutathione-regulated potassium-efflux system protein KefB</fullName>
    </recommendedName>
    <alternativeName>
        <fullName evidence="1">K(+)/H(+) antiporter</fullName>
    </alternativeName>
</protein>
<evidence type="ECO:0000255" key="1">
    <source>
        <dbReference type="HAMAP-Rule" id="MF_01412"/>
    </source>
</evidence>
<evidence type="ECO:0000255" key="2">
    <source>
        <dbReference type="PROSITE-ProRule" id="PRU00543"/>
    </source>
</evidence>
<organism>
    <name type="scientific">Escherichia coli O9:H4 (strain HS)</name>
    <dbReference type="NCBI Taxonomy" id="331112"/>
    <lineage>
        <taxon>Bacteria</taxon>
        <taxon>Pseudomonadati</taxon>
        <taxon>Pseudomonadota</taxon>
        <taxon>Gammaproteobacteria</taxon>
        <taxon>Enterobacterales</taxon>
        <taxon>Enterobacteriaceae</taxon>
        <taxon>Escherichia</taxon>
    </lineage>
</organism>
<dbReference type="EMBL" id="CP000802">
    <property type="protein sequence ID" value="ABV07762.1"/>
    <property type="molecule type" value="Genomic_DNA"/>
</dbReference>
<dbReference type="RefSeq" id="WP_000399122.1">
    <property type="nucleotide sequence ID" value="NC_009800.1"/>
</dbReference>
<dbReference type="SMR" id="A8A5F8"/>
<dbReference type="GeneID" id="93778647"/>
<dbReference type="KEGG" id="ecx:EcHS_A3547"/>
<dbReference type="HOGENOM" id="CLU_005126_9_3_6"/>
<dbReference type="GO" id="GO:0005886">
    <property type="term" value="C:plasma membrane"/>
    <property type="evidence" value="ECO:0007669"/>
    <property type="project" value="UniProtKB-SubCell"/>
</dbReference>
<dbReference type="GO" id="GO:0015503">
    <property type="term" value="F:glutathione-regulated potassium exporter activity"/>
    <property type="evidence" value="ECO:0007669"/>
    <property type="project" value="UniProtKB-UniRule"/>
</dbReference>
<dbReference type="GO" id="GO:1902600">
    <property type="term" value="P:proton transmembrane transport"/>
    <property type="evidence" value="ECO:0007669"/>
    <property type="project" value="InterPro"/>
</dbReference>
<dbReference type="FunFam" id="1.20.1530.20:FF:000001">
    <property type="entry name" value="Glutathione-regulated potassium-efflux system protein KefB"/>
    <property type="match status" value="1"/>
</dbReference>
<dbReference type="FunFam" id="3.40.50.720:FF:000036">
    <property type="entry name" value="Glutathione-regulated potassium-efflux system protein KefB"/>
    <property type="match status" value="1"/>
</dbReference>
<dbReference type="Gene3D" id="1.20.1530.20">
    <property type="match status" value="1"/>
</dbReference>
<dbReference type="Gene3D" id="3.40.50.720">
    <property type="entry name" value="NAD(P)-binding Rossmann-like Domain"/>
    <property type="match status" value="1"/>
</dbReference>
<dbReference type="HAMAP" id="MF_01412">
    <property type="entry name" value="K_H_efflux_KefB"/>
    <property type="match status" value="1"/>
</dbReference>
<dbReference type="InterPro" id="IPR006153">
    <property type="entry name" value="Cation/H_exchanger_TM"/>
</dbReference>
<dbReference type="InterPro" id="IPR004771">
    <property type="entry name" value="K/H_exchanger"/>
</dbReference>
<dbReference type="InterPro" id="IPR020884">
    <property type="entry name" value="K_H_efflux_KefB"/>
</dbReference>
<dbReference type="InterPro" id="IPR038770">
    <property type="entry name" value="Na+/solute_symporter_sf"/>
</dbReference>
<dbReference type="InterPro" id="IPR036291">
    <property type="entry name" value="NAD(P)-bd_dom_sf"/>
</dbReference>
<dbReference type="InterPro" id="IPR003148">
    <property type="entry name" value="RCK_N"/>
</dbReference>
<dbReference type="NCBIfam" id="TIGR00932">
    <property type="entry name" value="2a37"/>
    <property type="match status" value="1"/>
</dbReference>
<dbReference type="NCBIfam" id="NF002973">
    <property type="entry name" value="PRK03659.1"/>
    <property type="match status" value="1"/>
</dbReference>
<dbReference type="PANTHER" id="PTHR46157">
    <property type="entry name" value="K(+) EFFLUX ANTIPORTER 3, CHLOROPLASTIC"/>
    <property type="match status" value="1"/>
</dbReference>
<dbReference type="PANTHER" id="PTHR46157:SF4">
    <property type="entry name" value="K(+) EFFLUX ANTIPORTER 3, CHLOROPLASTIC"/>
    <property type="match status" value="1"/>
</dbReference>
<dbReference type="Pfam" id="PF00999">
    <property type="entry name" value="Na_H_Exchanger"/>
    <property type="match status" value="1"/>
</dbReference>
<dbReference type="Pfam" id="PF02254">
    <property type="entry name" value="TrkA_N"/>
    <property type="match status" value="1"/>
</dbReference>
<dbReference type="SUPFAM" id="SSF51735">
    <property type="entry name" value="NAD(P)-binding Rossmann-fold domains"/>
    <property type="match status" value="1"/>
</dbReference>
<dbReference type="PROSITE" id="PS51201">
    <property type="entry name" value="RCK_N"/>
    <property type="match status" value="1"/>
</dbReference>
<sequence>MEGSDFLLAGVLFLFAAVAAVPLASRLGIGAVLGYLLAGIAIGPWGLGFISDVDEILHFSELGVVFLMFIIGLELNPSKLWQLRRSIFGVGAAQVLLSAALLAGLLMLTDFAWQAAVVGGIGLAMSSTAMALQLMREKGMNRSESGQLGFSVLLFQDLAVIPALALVPLLAGSADEHFDWMKIGMKVLAFVGMLIGGRYLLRPVFRFIAASGVREVFTAATLLLVLGSALFMDALGLSMALGTFIAGVLLAESEYRHELETAIDPFKGLLLGLFFISVGMSLNLGVLYTHLLWVVISVVVLVAVKILVLYLLARLYGVRSSERMQFAGVLSQGGEFAFVLFSTASSQRLFQGDQMALLLVTVTLSMMTTPLLMKLVDKWLSRQFNGPEEEDEKPWVNDDKPQVIVVGFGRFGQVIGRLLMANKMRITVLERDISAVNLMRKYGYKVYYGDATQVDLLRSAGAEAAESIVITCNEPEDTMKLVEICQQHFPHLHILARARGRVEAHELLQAGVTQFSRETFSSALELGRKTLVTLGMHPHQAQRAQLHFRRLDMRMLRELIPMHADTVQISRAREARRELEEIFQREMQQERRQLDGWDEFE</sequence>
<feature type="chain" id="PRO_1000068455" description="Glutathione-regulated potassium-efflux system protein KefB">
    <location>
        <begin position="1"/>
        <end position="601"/>
    </location>
</feature>
<feature type="transmembrane region" description="Helical" evidence="1">
    <location>
        <begin position="4"/>
        <end position="24"/>
    </location>
</feature>
<feature type="transmembrane region" description="Helical" evidence="1">
    <location>
        <begin position="29"/>
        <end position="49"/>
    </location>
</feature>
<feature type="transmembrane region" description="Helical" evidence="1">
    <location>
        <begin position="55"/>
        <end position="75"/>
    </location>
</feature>
<feature type="transmembrane region" description="Helical" evidence="1">
    <location>
        <begin position="87"/>
        <end position="107"/>
    </location>
</feature>
<feature type="transmembrane region" description="Helical" evidence="1">
    <location>
        <begin position="115"/>
        <end position="135"/>
    </location>
</feature>
<feature type="transmembrane region" description="Helical" evidence="1">
    <location>
        <begin position="152"/>
        <end position="172"/>
    </location>
</feature>
<feature type="transmembrane region" description="Helical" evidence="1">
    <location>
        <begin position="177"/>
        <end position="197"/>
    </location>
</feature>
<feature type="transmembrane region" description="Helical" evidence="1">
    <location>
        <begin position="207"/>
        <end position="227"/>
    </location>
</feature>
<feature type="transmembrane region" description="Helical" evidence="1">
    <location>
        <begin position="230"/>
        <end position="250"/>
    </location>
</feature>
<feature type="transmembrane region" description="Helical" evidence="1">
    <location>
        <begin position="268"/>
        <end position="288"/>
    </location>
</feature>
<feature type="transmembrane region" description="Helical" evidence="1">
    <location>
        <begin position="291"/>
        <end position="311"/>
    </location>
</feature>
<feature type="transmembrane region" description="Helical" evidence="1">
    <location>
        <begin position="324"/>
        <end position="344"/>
    </location>
</feature>
<feature type="transmembrane region" description="Helical" evidence="1">
    <location>
        <begin position="356"/>
        <end position="376"/>
    </location>
</feature>
<feature type="domain" description="RCK N-terminal" evidence="2">
    <location>
        <begin position="400"/>
        <end position="519"/>
    </location>
</feature>
<name>KEFB_ECOHS</name>
<proteinExistence type="inferred from homology"/>
<accession>A8A5F8</accession>
<gene>
    <name evidence="1" type="primary">kefB</name>
    <name type="ordered locus">EcHS_A3547</name>
</gene>
<reference key="1">
    <citation type="journal article" date="2008" name="J. Bacteriol.">
        <title>The pangenome structure of Escherichia coli: comparative genomic analysis of E. coli commensal and pathogenic isolates.</title>
        <authorList>
            <person name="Rasko D.A."/>
            <person name="Rosovitz M.J."/>
            <person name="Myers G.S.A."/>
            <person name="Mongodin E.F."/>
            <person name="Fricke W.F."/>
            <person name="Gajer P."/>
            <person name="Crabtree J."/>
            <person name="Sebaihia M."/>
            <person name="Thomson N.R."/>
            <person name="Chaudhuri R."/>
            <person name="Henderson I.R."/>
            <person name="Sperandio V."/>
            <person name="Ravel J."/>
        </authorList>
    </citation>
    <scope>NUCLEOTIDE SEQUENCE [LARGE SCALE GENOMIC DNA]</scope>
    <source>
        <strain>HS</strain>
    </source>
</reference>